<comment type="function">
    <text evidence="2">Required the formation of the callose wall separating the tetraspores (interstitial wall), but not for the callose wall surrounding the pollen mother cells (peripheral wall). Functionally redudant to CALS12 (GSL5). During plant growth and development, callose is found as a transitory component of the cell plate in dividing cells, is a major component of pollen mother cell walls and pollen tubes, and is found as a structural component of plasmodesmatal canals.</text>
</comment>
<comment type="catalytic activity">
    <reaction>
        <text>[(1-&gt;3)-beta-D-glucosyl](n) + UDP-alpha-D-glucose = [(1-&gt;3)-beta-D-glucosyl](n+1) + UDP + H(+)</text>
        <dbReference type="Rhea" id="RHEA:21476"/>
        <dbReference type="Rhea" id="RHEA-COMP:11146"/>
        <dbReference type="Rhea" id="RHEA-COMP:14303"/>
        <dbReference type="ChEBI" id="CHEBI:15378"/>
        <dbReference type="ChEBI" id="CHEBI:37671"/>
        <dbReference type="ChEBI" id="CHEBI:58223"/>
        <dbReference type="ChEBI" id="CHEBI:58885"/>
        <dbReference type="EC" id="2.4.1.34"/>
    </reaction>
</comment>
<comment type="subcellular location">
    <subcellularLocation>
        <location evidence="3">Cell membrane</location>
        <topology evidence="3">Multi-pass membrane protein</topology>
    </subcellularLocation>
</comment>
<comment type="tissue specificity">
    <text evidence="2">Ubiquitous.</text>
</comment>
<comment type="disruption phenotype">
    <text evidence="2">Plants develop collapsed and inviable pollen grains.</text>
</comment>
<comment type="similarity">
    <text evidence="3">Belongs to the glycosyltransferase 48 family.</text>
</comment>
<organism>
    <name type="scientific">Arabidopsis thaliana</name>
    <name type="common">Mouse-ear cress</name>
    <dbReference type="NCBI Taxonomy" id="3702"/>
    <lineage>
        <taxon>Eukaryota</taxon>
        <taxon>Viridiplantae</taxon>
        <taxon>Streptophyta</taxon>
        <taxon>Embryophyta</taxon>
        <taxon>Tracheophyta</taxon>
        <taxon>Spermatophyta</taxon>
        <taxon>Magnoliopsida</taxon>
        <taxon>eudicotyledons</taxon>
        <taxon>Gunneridae</taxon>
        <taxon>Pentapetalae</taxon>
        <taxon>rosids</taxon>
        <taxon>malvids</taxon>
        <taxon>Brassicales</taxon>
        <taxon>Brassicaceae</taxon>
        <taxon>Camelineae</taxon>
        <taxon>Arabidopsis</taxon>
    </lineage>
</organism>
<proteinExistence type="evidence at transcript level"/>
<dbReference type="EC" id="2.4.1.34"/>
<dbReference type="EMBL" id="AF162444">
    <property type="protein sequence ID" value="AAD48971.1"/>
    <property type="molecule type" value="Genomic_DNA"/>
</dbReference>
<dbReference type="EMBL" id="AL161502">
    <property type="protein sequence ID" value="CAB81039.1"/>
    <property type="molecule type" value="Genomic_DNA"/>
</dbReference>
<dbReference type="EMBL" id="CP002687">
    <property type="protein sequence ID" value="AEE82451.1"/>
    <property type="molecule type" value="Genomic_DNA"/>
</dbReference>
<dbReference type="EMBL" id="AY050990">
    <property type="protein sequence ID" value="AAK93667.2"/>
    <property type="molecule type" value="mRNA"/>
</dbReference>
<dbReference type="PIR" id="E85062">
    <property type="entry name" value="E85062"/>
</dbReference>
<dbReference type="RefSeq" id="NP_567278.1">
    <property type="nucleotide sequence ID" value="NM_116736.2"/>
</dbReference>
<dbReference type="FunCoup" id="Q9S9U0">
    <property type="interactions" value="716"/>
</dbReference>
<dbReference type="STRING" id="3702.Q9S9U0"/>
<dbReference type="CAZy" id="GT48">
    <property type="family name" value="Glycosyltransferase Family 48"/>
</dbReference>
<dbReference type="GlyGen" id="Q9S9U0">
    <property type="glycosylation" value="1 site"/>
</dbReference>
<dbReference type="iPTMnet" id="Q9S9U0"/>
<dbReference type="PaxDb" id="3702-AT4G04970.1"/>
<dbReference type="ProteomicsDB" id="222795"/>
<dbReference type="EnsemblPlants" id="AT4G04970.1">
    <property type="protein sequence ID" value="AT4G04970.1"/>
    <property type="gene ID" value="AT4G04970"/>
</dbReference>
<dbReference type="GeneID" id="825838"/>
<dbReference type="Gramene" id="AT4G04970.1">
    <property type="protein sequence ID" value="AT4G04970.1"/>
    <property type="gene ID" value="AT4G04970"/>
</dbReference>
<dbReference type="KEGG" id="ath:AT4G04970"/>
<dbReference type="Araport" id="AT4G04970"/>
<dbReference type="TAIR" id="AT4G04970">
    <property type="gene designation" value="GSL1"/>
</dbReference>
<dbReference type="eggNOG" id="KOG0916">
    <property type="taxonomic scope" value="Eukaryota"/>
</dbReference>
<dbReference type="HOGENOM" id="CLU_000742_1_1_1"/>
<dbReference type="InParanoid" id="Q9S9U0"/>
<dbReference type="OMA" id="DMNQDNH"/>
<dbReference type="PhylomeDB" id="Q9S9U0"/>
<dbReference type="BioCyc" id="ARA:AT4G04970-MONOMER"/>
<dbReference type="PRO" id="PR:Q9S9U0"/>
<dbReference type="Proteomes" id="UP000006548">
    <property type="component" value="Chromosome 4"/>
</dbReference>
<dbReference type="ExpressionAtlas" id="Q9S9U0">
    <property type="expression patterns" value="baseline and differential"/>
</dbReference>
<dbReference type="GO" id="GO:0000148">
    <property type="term" value="C:1,3-beta-D-glucan synthase complex"/>
    <property type="evidence" value="ECO:0007669"/>
    <property type="project" value="InterPro"/>
</dbReference>
<dbReference type="GO" id="GO:0005886">
    <property type="term" value="C:plasma membrane"/>
    <property type="evidence" value="ECO:0007669"/>
    <property type="project" value="UniProtKB-SubCell"/>
</dbReference>
<dbReference type="GO" id="GO:0003843">
    <property type="term" value="F:1,3-beta-D-glucan synthase activity"/>
    <property type="evidence" value="ECO:0007669"/>
    <property type="project" value="UniProtKB-EC"/>
</dbReference>
<dbReference type="GO" id="GO:0006075">
    <property type="term" value="P:(1-&gt;3)-beta-D-glucan biosynthetic process"/>
    <property type="evidence" value="ECO:0007669"/>
    <property type="project" value="InterPro"/>
</dbReference>
<dbReference type="GO" id="GO:0071555">
    <property type="term" value="P:cell wall organization"/>
    <property type="evidence" value="ECO:0007669"/>
    <property type="project" value="UniProtKB-KW"/>
</dbReference>
<dbReference type="GO" id="GO:0007623">
    <property type="term" value="P:circadian rhythm"/>
    <property type="evidence" value="ECO:0000270"/>
    <property type="project" value="TAIR"/>
</dbReference>
<dbReference type="GO" id="GO:0009555">
    <property type="term" value="P:pollen development"/>
    <property type="evidence" value="ECO:0000316"/>
    <property type="project" value="TAIR"/>
</dbReference>
<dbReference type="GO" id="GO:0008360">
    <property type="term" value="P:regulation of cell shape"/>
    <property type="evidence" value="ECO:0007669"/>
    <property type="project" value="UniProtKB-KW"/>
</dbReference>
<dbReference type="InterPro" id="IPR026899">
    <property type="entry name" value="FKS1-like_dom1"/>
</dbReference>
<dbReference type="InterPro" id="IPR003440">
    <property type="entry name" value="Glyco_trans_48_dom"/>
</dbReference>
<dbReference type="PANTHER" id="PTHR12741:SF102">
    <property type="entry name" value="CALLOSE SYNTHASE 11"/>
    <property type="match status" value="1"/>
</dbReference>
<dbReference type="PANTHER" id="PTHR12741">
    <property type="entry name" value="LYST-INTERACTING PROTEIN LIP5 DOPAMINE RESPONSIVE PROTEIN DRG-1"/>
    <property type="match status" value="1"/>
</dbReference>
<dbReference type="Pfam" id="PF14288">
    <property type="entry name" value="FKS1_dom1"/>
    <property type="match status" value="1"/>
</dbReference>
<dbReference type="Pfam" id="PF02364">
    <property type="entry name" value="Glucan_synthase"/>
    <property type="match status" value="1"/>
</dbReference>
<dbReference type="SMART" id="SM01205">
    <property type="entry name" value="FKS1_dom1"/>
    <property type="match status" value="1"/>
</dbReference>
<keyword id="KW-1003">Cell membrane</keyword>
<keyword id="KW-0133">Cell shape</keyword>
<keyword id="KW-0961">Cell wall biogenesis/degradation</keyword>
<keyword id="KW-0328">Glycosyltransferase</keyword>
<keyword id="KW-0472">Membrane</keyword>
<keyword id="KW-1185">Reference proteome</keyword>
<keyword id="KW-0808">Transferase</keyword>
<keyword id="KW-0812">Transmembrane</keyword>
<keyword id="KW-1133">Transmembrane helix</keyword>
<gene>
    <name type="primary">CALS11</name>
    <name type="synonym">GSL1</name>
    <name type="ordered locus">At4g04970</name>
    <name type="ORF">T32N4.8</name>
</gene>
<sequence length="1768" mass="205526">MRRQRPSVATARDAPSLEVYNIIPIHDFLTEHPSLRYPEVRAAAAALRIVGDLPKPPFADFTPRMDLMDWLGLLFGFQIDNVRNQRENLVLHLANSQMRLQPPPRHPDGLDPTVLRRFRKKLLRNYTNWCSFLGVRCHVTSPIQSRHQTNAVLNLRRELLYVALYLLIWGESANLRFMPECLCYIFHHMAMELNKVLAGEFDDMTGMPYWPSFSGDCAFLKSVVMPIYKTVKTEVESSNNGTKPHSAWRNYDDINEYFWSKRALKSLKWPLDYTSNFFDTTPKSSRVGKTGFVEQRSFWNVYRSFDRLWILLLLYLQAAIIVATSDVKFPWQDRDVEVALLTVFISWAGLRLLQSVLDASTQYSLVSRETYWLFIRLTLKFVVAVAWTVLFSVFYARIWSQKNKDGVWSRAANERVVTFLKVVFVYVIPELLALVLFIVPCIRNWVEELNLGVVYFLTWWFYSKTFVGRGMREGLVDNVKYTLFWIIVLATKFIFSYFLQIRPLIAPTRALLNLKDATYNWHEFFGSTHRIAVGMLWLPVILVYLMDLQIWYSIYSSLVGATIGLFSHLGEIRNIDQLRLRFQFFSSAMQFNLKPEEHLLSPKATMLKKARDAIHRLKLRYGIGQPFNKIESSQVEATWFALIWNEIILTFREEDLISDREVELLELPPNCWNIRVIRWPCFLLCNELLLALSQANELCDAPDHWLWSKICSSEYRRCAVMEAFDSIKFVILKIVKNGTEEESILNRLFMEIDENVENEKITEVYKLTVLLRIHEKLISLLERLMDPEKKVFRIVNILQALYELCAWEFPKTRRSTPQLRQLGLAPISLEADTELLFVNAINLPPLDDVVFYRQIRRVHTILTSRDPMHNVPKNIEARERLAFFSNSLFMTMPQAPSVEKMMAFSVLTPYYDEEVMYRQEMLRAENEDGISTLFYLQRIYEDEWVNFLERMRREGAENENDIWSKKVRDLRLWASYRGQTLSRTVRGMMYYYSALKKLAFLDSASEMDIRMGTQIAPEARRSYYTNDGGDNTLQPTPSQEISRMASGITHLLKGSEYGSAMMKFTYVVACQVYGQHKARGDHRAEEILFLMKNHDALRIAYVDEVDLGRGEVEYYSVLVKFDQQLQREVEIYRIRLPGPLKLGEGKPENQNHALIFTRGDAIQTIDMNQDNHFEEALKMRNLLESFKTYYGIRKPTILGVREKVFTGSVSSLAWFMSAQETSFVTLGQRVLANPLKVRMHYGHPDVFDRFWFVPRGGISKASRVINISEDIFAGFNCTLRGGNVTHHEYIQVGKGRDVGLNQISMFEAKVASGNGEQALSRDVYRLGHRLDFFRMLSFFYTTVGYYFNTMLIVFTVYAFLWGRLYLALSGVEKIAKDRSSSNEALGAILNQQFIIQLGLFTALPMILENSLERGFLPAVWDFITMQLQLASFFYTFSMGTRTHYFGRTILHGGAKYRATGRGFVVEHKKFAENYRLYARTHFIKAIELAIILLVYAAYSPLAKSSFVYILMTISSWFLITSWIISPFLFNPSGFDWLKTVNDFDDFIAWLWSRGGLFTKADQSWFTWWNEEQEHLKTTGVWGKLLEIILDLRFFFFQYSIVYHLRIAENRTSIGVYLISWGCIIGIVAIYITTIYAQKRYSVKEHIKYRFIQFLVILLTVLVVVMMLQFTKLTVVDLLISLLAFVPTGWGLISIAQVLKPFLLSTVVWDTVISVARFYDLFFGLIVMAPVALLSWLPGFQNMQTRILFNEAFSRGLQISIILAGKKST</sequence>
<evidence type="ECO:0000255" key="1"/>
<evidence type="ECO:0000269" key="2">
    <source>
    </source>
</evidence>
<evidence type="ECO:0000305" key="3"/>
<name>CALSB_ARATH</name>
<accession>Q9S9U0</accession>
<accession>Q949N5</accession>
<feature type="chain" id="PRO_0000334583" description="Callose synthase 11">
    <location>
        <begin position="1"/>
        <end position="1768"/>
    </location>
</feature>
<feature type="topological domain" description="Cytoplasmic" evidence="1">
    <location>
        <begin position="1"/>
        <end position="308"/>
    </location>
</feature>
<feature type="transmembrane region" description="Helical" evidence="1">
    <location>
        <begin position="309"/>
        <end position="329"/>
    </location>
</feature>
<feature type="topological domain" description="Extracellular" evidence="1">
    <location>
        <begin position="330"/>
        <end position="335"/>
    </location>
</feature>
<feature type="transmembrane region" description="Helical" evidence="1">
    <location>
        <begin position="336"/>
        <end position="356"/>
    </location>
</feature>
<feature type="topological domain" description="Cytoplasmic" evidence="1">
    <location>
        <begin position="357"/>
        <end position="370"/>
    </location>
</feature>
<feature type="transmembrane region" description="Helical" evidence="1">
    <location>
        <begin position="371"/>
        <end position="391"/>
    </location>
</feature>
<feature type="topological domain" description="Extracellular" evidence="1">
    <location>
        <begin position="392"/>
        <end position="421"/>
    </location>
</feature>
<feature type="transmembrane region" description="Helical" evidence="1">
    <location>
        <begin position="422"/>
        <end position="442"/>
    </location>
</feature>
<feature type="topological domain" description="Cytoplasmic" evidence="1">
    <location>
        <begin position="443"/>
        <end position="480"/>
    </location>
</feature>
<feature type="transmembrane region" description="Helical" evidence="1">
    <location>
        <begin position="481"/>
        <end position="501"/>
    </location>
</feature>
<feature type="topological domain" description="Extracellular" evidence="1">
    <location>
        <begin position="502"/>
        <end position="530"/>
    </location>
</feature>
<feature type="transmembrane region" description="Helical" evidence="1">
    <location>
        <begin position="531"/>
        <end position="551"/>
    </location>
</feature>
<feature type="topological domain" description="Cytoplasmic" evidence="1">
    <location>
        <begin position="552"/>
        <end position="1341"/>
    </location>
</feature>
<feature type="transmembrane region" description="Helical" evidence="1">
    <location>
        <begin position="1342"/>
        <end position="1362"/>
    </location>
</feature>
<feature type="topological domain" description="Extracellular" evidence="1">
    <location>
        <begin position="1363"/>
        <end position="1386"/>
    </location>
</feature>
<feature type="transmembrane region" description="Helical" evidence="1">
    <location>
        <begin position="1387"/>
        <end position="1407"/>
    </location>
</feature>
<feature type="topological domain" description="Cytoplasmic" evidence="1">
    <location>
        <begin position="1408"/>
        <end position="1413"/>
    </location>
</feature>
<feature type="transmembrane region" description="Helical" evidence="1">
    <location>
        <begin position="1414"/>
        <end position="1434"/>
    </location>
</feature>
<feature type="topological domain" description="Extracellular" evidence="1">
    <location>
        <begin position="1435"/>
        <end position="1481"/>
    </location>
</feature>
<feature type="transmembrane region" description="Helical" evidence="1">
    <location>
        <begin position="1482"/>
        <end position="1502"/>
    </location>
</feature>
<feature type="topological domain" description="Cytoplasmic" evidence="1">
    <location>
        <begin position="1503"/>
        <end position="1508"/>
    </location>
</feature>
<feature type="transmembrane region" description="Helical" evidence="1">
    <location>
        <begin position="1509"/>
        <end position="1529"/>
    </location>
</feature>
<feature type="topological domain" description="Extracellular" evidence="1">
    <location>
        <begin position="1530"/>
        <end position="1583"/>
    </location>
</feature>
<feature type="transmembrane region" description="Helical" evidence="1">
    <location>
        <begin position="1584"/>
        <end position="1604"/>
    </location>
</feature>
<feature type="topological domain" description="Cytoplasmic" evidence="1">
    <location>
        <begin position="1605"/>
        <end position="1612"/>
    </location>
</feature>
<feature type="transmembrane region" description="Helical" evidence="1">
    <location>
        <begin position="1613"/>
        <end position="1633"/>
    </location>
</feature>
<feature type="topological domain" description="Extracellular" evidence="1">
    <location>
        <begin position="1634"/>
        <end position="1649"/>
    </location>
</feature>
<feature type="transmembrane region" description="Helical" evidence="1">
    <location>
        <begin position="1650"/>
        <end position="1670"/>
    </location>
</feature>
<feature type="topological domain" description="Cytoplasmic" evidence="1">
    <location>
        <begin position="1671"/>
        <end position="1673"/>
    </location>
</feature>
<feature type="transmembrane region" description="Helical" evidence="1">
    <location>
        <begin position="1674"/>
        <end position="1694"/>
    </location>
</feature>
<feature type="topological domain" description="Extracellular" evidence="1">
    <location>
        <begin position="1695"/>
        <end position="1719"/>
    </location>
</feature>
<feature type="transmembrane region" description="Helical" evidence="1">
    <location>
        <begin position="1720"/>
        <end position="1740"/>
    </location>
</feature>
<feature type="topological domain" description="Cytoplasmic" evidence="1">
    <location>
        <begin position="1741"/>
        <end position="1768"/>
    </location>
</feature>
<protein>
    <recommendedName>
        <fullName>Callose synthase 11</fullName>
        <ecNumber>2.4.1.34</ecNumber>
    </recommendedName>
    <alternativeName>
        <fullName>1,3-beta-glucan synthase</fullName>
    </alternativeName>
    <alternativeName>
        <fullName>Protein GLUCAN SYNTHASE-LIKE 1</fullName>
    </alternativeName>
</protein>
<reference key="1">
    <citation type="journal article" date="1999" name="Nature">
        <title>Sequence and analysis of chromosome 4 of the plant Arabidopsis thaliana.</title>
        <authorList>
            <person name="Mayer K.F.X."/>
            <person name="Schueller C."/>
            <person name="Wambutt R."/>
            <person name="Murphy G."/>
            <person name="Volckaert G."/>
            <person name="Pohl T."/>
            <person name="Duesterhoeft A."/>
            <person name="Stiekema W."/>
            <person name="Entian K.-D."/>
            <person name="Terryn N."/>
            <person name="Harris B."/>
            <person name="Ansorge W."/>
            <person name="Brandt P."/>
            <person name="Grivell L.A."/>
            <person name="Rieger M."/>
            <person name="Weichselgartner M."/>
            <person name="de Simone V."/>
            <person name="Obermaier B."/>
            <person name="Mache R."/>
            <person name="Mueller M."/>
            <person name="Kreis M."/>
            <person name="Delseny M."/>
            <person name="Puigdomenech P."/>
            <person name="Watson M."/>
            <person name="Schmidtheini T."/>
            <person name="Reichert B."/>
            <person name="Portetelle D."/>
            <person name="Perez-Alonso M."/>
            <person name="Boutry M."/>
            <person name="Bancroft I."/>
            <person name="Vos P."/>
            <person name="Hoheisel J."/>
            <person name="Zimmermann W."/>
            <person name="Wedler H."/>
            <person name="Ridley P."/>
            <person name="Langham S.-A."/>
            <person name="McCullagh B."/>
            <person name="Bilham L."/>
            <person name="Robben J."/>
            <person name="van der Schueren J."/>
            <person name="Grymonprez B."/>
            <person name="Chuang Y.-J."/>
            <person name="Vandenbussche F."/>
            <person name="Braeken M."/>
            <person name="Weltjens I."/>
            <person name="Voet M."/>
            <person name="Bastiaens I."/>
            <person name="Aert R."/>
            <person name="Defoor E."/>
            <person name="Weitzenegger T."/>
            <person name="Bothe G."/>
            <person name="Ramsperger U."/>
            <person name="Hilbert H."/>
            <person name="Braun M."/>
            <person name="Holzer E."/>
            <person name="Brandt A."/>
            <person name="Peters S."/>
            <person name="van Staveren M."/>
            <person name="Dirkse W."/>
            <person name="Mooijman P."/>
            <person name="Klein Lankhorst R."/>
            <person name="Rose M."/>
            <person name="Hauf J."/>
            <person name="Koetter P."/>
            <person name="Berneiser S."/>
            <person name="Hempel S."/>
            <person name="Feldpausch M."/>
            <person name="Lamberth S."/>
            <person name="Van den Daele H."/>
            <person name="De Keyser A."/>
            <person name="Buysshaert C."/>
            <person name="Gielen J."/>
            <person name="Villarroel R."/>
            <person name="De Clercq R."/>
            <person name="van Montagu M."/>
            <person name="Rogers J."/>
            <person name="Cronin A."/>
            <person name="Quail M.A."/>
            <person name="Bray-Allen S."/>
            <person name="Clark L."/>
            <person name="Doggett J."/>
            <person name="Hall S."/>
            <person name="Kay M."/>
            <person name="Lennard N."/>
            <person name="McLay K."/>
            <person name="Mayes R."/>
            <person name="Pettett A."/>
            <person name="Rajandream M.A."/>
            <person name="Lyne M."/>
            <person name="Benes V."/>
            <person name="Rechmann S."/>
            <person name="Borkova D."/>
            <person name="Bloecker H."/>
            <person name="Scharfe M."/>
            <person name="Grimm M."/>
            <person name="Loehnert T.-H."/>
            <person name="Dose S."/>
            <person name="de Haan M."/>
            <person name="Maarse A.C."/>
            <person name="Schaefer M."/>
            <person name="Mueller-Auer S."/>
            <person name="Gabel C."/>
            <person name="Fuchs M."/>
            <person name="Fartmann B."/>
            <person name="Granderath K."/>
            <person name="Dauner D."/>
            <person name="Herzl A."/>
            <person name="Neumann S."/>
            <person name="Argiriou A."/>
            <person name="Vitale D."/>
            <person name="Liguori R."/>
            <person name="Piravandi E."/>
            <person name="Massenet O."/>
            <person name="Quigley F."/>
            <person name="Clabauld G."/>
            <person name="Muendlein A."/>
            <person name="Felber R."/>
            <person name="Schnabl S."/>
            <person name="Hiller R."/>
            <person name="Schmidt W."/>
            <person name="Lecharny A."/>
            <person name="Aubourg S."/>
            <person name="Chefdor F."/>
            <person name="Cooke R."/>
            <person name="Berger C."/>
            <person name="Monfort A."/>
            <person name="Casacuberta E."/>
            <person name="Gibbons T."/>
            <person name="Weber N."/>
            <person name="Vandenbol M."/>
            <person name="Bargues M."/>
            <person name="Terol J."/>
            <person name="Torres A."/>
            <person name="Perez-Perez A."/>
            <person name="Purnelle B."/>
            <person name="Bent E."/>
            <person name="Johnson S."/>
            <person name="Tacon D."/>
            <person name="Jesse T."/>
            <person name="Heijnen L."/>
            <person name="Schwarz S."/>
            <person name="Scholler P."/>
            <person name="Heber S."/>
            <person name="Francs P."/>
            <person name="Bielke C."/>
            <person name="Frishman D."/>
            <person name="Haase D."/>
            <person name="Lemcke K."/>
            <person name="Mewes H.-W."/>
            <person name="Stocker S."/>
            <person name="Zaccaria P."/>
            <person name="Bevan M."/>
            <person name="Wilson R.K."/>
            <person name="de la Bastide M."/>
            <person name="Habermann K."/>
            <person name="Parnell L."/>
            <person name="Dedhia N."/>
            <person name="Gnoj L."/>
            <person name="Schutz K."/>
            <person name="Huang E."/>
            <person name="Spiegel L."/>
            <person name="Sekhon M."/>
            <person name="Murray J."/>
            <person name="Sheet P."/>
            <person name="Cordes M."/>
            <person name="Abu-Threideh J."/>
            <person name="Stoneking T."/>
            <person name="Kalicki J."/>
            <person name="Graves T."/>
            <person name="Harmon G."/>
            <person name="Edwards J."/>
            <person name="Latreille P."/>
            <person name="Courtney L."/>
            <person name="Cloud J."/>
            <person name="Abbott A."/>
            <person name="Scott K."/>
            <person name="Johnson D."/>
            <person name="Minx P."/>
            <person name="Bentley D."/>
            <person name="Fulton B."/>
            <person name="Miller N."/>
            <person name="Greco T."/>
            <person name="Kemp K."/>
            <person name="Kramer J."/>
            <person name="Fulton L."/>
            <person name="Mardis E."/>
            <person name="Dante M."/>
            <person name="Pepin K."/>
            <person name="Hillier L.W."/>
            <person name="Nelson J."/>
            <person name="Spieth J."/>
            <person name="Ryan E."/>
            <person name="Andrews S."/>
            <person name="Geisel C."/>
            <person name="Layman D."/>
            <person name="Du H."/>
            <person name="Ali J."/>
            <person name="Berghoff A."/>
            <person name="Jones K."/>
            <person name="Drone K."/>
            <person name="Cotton M."/>
            <person name="Joshu C."/>
            <person name="Antonoiu B."/>
            <person name="Zidanic M."/>
            <person name="Strong C."/>
            <person name="Sun H."/>
            <person name="Lamar B."/>
            <person name="Yordan C."/>
            <person name="Ma P."/>
            <person name="Zhong J."/>
            <person name="Preston R."/>
            <person name="Vil D."/>
            <person name="Shekher M."/>
            <person name="Matero A."/>
            <person name="Shah R."/>
            <person name="Swaby I.K."/>
            <person name="O'Shaughnessy A."/>
            <person name="Rodriguez M."/>
            <person name="Hoffman J."/>
            <person name="Till S."/>
            <person name="Granat S."/>
            <person name="Shohdy N."/>
            <person name="Hasegawa A."/>
            <person name="Hameed A."/>
            <person name="Lodhi M."/>
            <person name="Johnson A."/>
            <person name="Chen E."/>
            <person name="Marra M.A."/>
            <person name="Martienssen R."/>
            <person name="McCombie W.R."/>
        </authorList>
    </citation>
    <scope>NUCLEOTIDE SEQUENCE [LARGE SCALE GENOMIC DNA]</scope>
    <source>
        <strain>cv. Columbia</strain>
    </source>
</reference>
<reference key="2">
    <citation type="journal article" date="2017" name="Plant J.">
        <title>Araport11: a complete reannotation of the Arabidopsis thaliana reference genome.</title>
        <authorList>
            <person name="Cheng C.Y."/>
            <person name="Krishnakumar V."/>
            <person name="Chan A.P."/>
            <person name="Thibaud-Nissen F."/>
            <person name="Schobel S."/>
            <person name="Town C.D."/>
        </authorList>
    </citation>
    <scope>GENOME REANNOTATION</scope>
    <source>
        <strain>cv. Columbia</strain>
    </source>
</reference>
<reference key="3">
    <citation type="journal article" date="2003" name="Science">
        <title>Empirical analysis of transcriptional activity in the Arabidopsis genome.</title>
        <authorList>
            <person name="Yamada K."/>
            <person name="Lim J."/>
            <person name="Dale J.M."/>
            <person name="Chen H."/>
            <person name="Shinn P."/>
            <person name="Palm C.J."/>
            <person name="Southwick A.M."/>
            <person name="Wu H.C."/>
            <person name="Kim C.J."/>
            <person name="Nguyen M."/>
            <person name="Pham P.K."/>
            <person name="Cheuk R.F."/>
            <person name="Karlin-Newmann G."/>
            <person name="Liu S.X."/>
            <person name="Lam B."/>
            <person name="Sakano H."/>
            <person name="Wu T."/>
            <person name="Yu G."/>
            <person name="Miranda M."/>
            <person name="Quach H.L."/>
            <person name="Tripp M."/>
            <person name="Chang C.H."/>
            <person name="Lee J.M."/>
            <person name="Toriumi M.J."/>
            <person name="Chan M.M."/>
            <person name="Tang C.C."/>
            <person name="Onodera C.S."/>
            <person name="Deng J.M."/>
            <person name="Akiyama K."/>
            <person name="Ansari Y."/>
            <person name="Arakawa T."/>
            <person name="Banh J."/>
            <person name="Banno F."/>
            <person name="Bowser L."/>
            <person name="Brooks S.Y."/>
            <person name="Carninci P."/>
            <person name="Chao Q."/>
            <person name="Choy N."/>
            <person name="Enju A."/>
            <person name="Goldsmith A.D."/>
            <person name="Gurjal M."/>
            <person name="Hansen N.F."/>
            <person name="Hayashizaki Y."/>
            <person name="Johnson-Hopson C."/>
            <person name="Hsuan V.W."/>
            <person name="Iida K."/>
            <person name="Karnes M."/>
            <person name="Khan S."/>
            <person name="Koesema E."/>
            <person name="Ishida J."/>
            <person name="Jiang P.X."/>
            <person name="Jones T."/>
            <person name="Kawai J."/>
            <person name="Kamiya A."/>
            <person name="Meyers C."/>
            <person name="Nakajima M."/>
            <person name="Narusaka M."/>
            <person name="Seki M."/>
            <person name="Sakurai T."/>
            <person name="Satou M."/>
            <person name="Tamse R."/>
            <person name="Vaysberg M."/>
            <person name="Wallender E.K."/>
            <person name="Wong C."/>
            <person name="Yamamura Y."/>
            <person name="Yuan S."/>
            <person name="Shinozaki K."/>
            <person name="Davis R.W."/>
            <person name="Theologis A."/>
            <person name="Ecker J.R."/>
        </authorList>
    </citation>
    <scope>NUCLEOTIDE SEQUENCE [LARGE SCALE MRNA] OF 1361-1768</scope>
    <source>
        <strain>cv. Columbia</strain>
    </source>
</reference>
<reference key="4">
    <citation type="journal article" date="2001" name="Plant Cell">
        <title>A cell plate-specific callose synthase and its interaction with phragmoplastin.</title>
        <authorList>
            <person name="Hong Z."/>
            <person name="Delauney A.J."/>
            <person name="Verma D.P.S."/>
        </authorList>
    </citation>
    <scope>GENE FAMILY</scope>
    <scope>NOMENCLATURE</scope>
</reference>
<reference key="5">
    <citation type="journal article" date="2005" name="Plant Mol. Biol.">
        <title>Two callose synthases, GSL1 and GSL5, play an essential and redundant role in plant and pollen development and in fertility.</title>
        <authorList>
            <person name="Enns L.C."/>
            <person name="Kanaoka M.M."/>
            <person name="Torii K.U."/>
            <person name="Comai L."/>
            <person name="Okada K."/>
            <person name="Cleland R.E."/>
        </authorList>
    </citation>
    <scope>FUNCTION</scope>
    <scope>TISSUE SPECIFICITY</scope>
    <scope>NOMENCLATURE</scope>
    <scope>DISRUPTION PHENOTYPE</scope>
</reference>